<accession>Q9SFU6</accession>
<accession>F4JDA3</accession>
<accession>Q8LF10</accession>
<reference key="1">
    <citation type="journal article" date="2000" name="Nature">
        <title>Sequence and analysis of chromosome 3 of the plant Arabidopsis thaliana.</title>
        <authorList>
            <person name="Salanoubat M."/>
            <person name="Lemcke K."/>
            <person name="Rieger M."/>
            <person name="Ansorge W."/>
            <person name="Unseld M."/>
            <person name="Fartmann B."/>
            <person name="Valle G."/>
            <person name="Bloecker H."/>
            <person name="Perez-Alonso M."/>
            <person name="Obermaier B."/>
            <person name="Delseny M."/>
            <person name="Boutry M."/>
            <person name="Grivell L.A."/>
            <person name="Mache R."/>
            <person name="Puigdomenech P."/>
            <person name="De Simone V."/>
            <person name="Choisne N."/>
            <person name="Artiguenave F."/>
            <person name="Robert C."/>
            <person name="Brottier P."/>
            <person name="Wincker P."/>
            <person name="Cattolico L."/>
            <person name="Weissenbach J."/>
            <person name="Saurin W."/>
            <person name="Quetier F."/>
            <person name="Schaefer M."/>
            <person name="Mueller-Auer S."/>
            <person name="Gabel C."/>
            <person name="Fuchs M."/>
            <person name="Benes V."/>
            <person name="Wurmbach E."/>
            <person name="Drzonek H."/>
            <person name="Erfle H."/>
            <person name="Jordan N."/>
            <person name="Bangert S."/>
            <person name="Wiedelmann R."/>
            <person name="Kranz H."/>
            <person name="Voss H."/>
            <person name="Holland R."/>
            <person name="Brandt P."/>
            <person name="Nyakatura G."/>
            <person name="Vezzi A."/>
            <person name="D'Angelo M."/>
            <person name="Pallavicini A."/>
            <person name="Toppo S."/>
            <person name="Simionati B."/>
            <person name="Conrad A."/>
            <person name="Hornischer K."/>
            <person name="Kauer G."/>
            <person name="Loehnert T.-H."/>
            <person name="Nordsiek G."/>
            <person name="Reichelt J."/>
            <person name="Scharfe M."/>
            <person name="Schoen O."/>
            <person name="Bargues M."/>
            <person name="Terol J."/>
            <person name="Climent J."/>
            <person name="Navarro P."/>
            <person name="Collado C."/>
            <person name="Perez-Perez A."/>
            <person name="Ottenwaelder B."/>
            <person name="Duchemin D."/>
            <person name="Cooke R."/>
            <person name="Laudie M."/>
            <person name="Berger-Llauro C."/>
            <person name="Purnelle B."/>
            <person name="Masuy D."/>
            <person name="de Haan M."/>
            <person name="Maarse A.C."/>
            <person name="Alcaraz J.-P."/>
            <person name="Cottet A."/>
            <person name="Casacuberta E."/>
            <person name="Monfort A."/>
            <person name="Argiriou A."/>
            <person name="Flores M."/>
            <person name="Liguori R."/>
            <person name="Vitale D."/>
            <person name="Mannhaupt G."/>
            <person name="Haase D."/>
            <person name="Schoof H."/>
            <person name="Rudd S."/>
            <person name="Zaccaria P."/>
            <person name="Mewes H.-W."/>
            <person name="Mayer K.F.X."/>
            <person name="Kaul S."/>
            <person name="Town C.D."/>
            <person name="Koo H.L."/>
            <person name="Tallon L.J."/>
            <person name="Jenkins J."/>
            <person name="Rooney T."/>
            <person name="Rizzo M."/>
            <person name="Walts A."/>
            <person name="Utterback T."/>
            <person name="Fujii C.Y."/>
            <person name="Shea T.P."/>
            <person name="Creasy T.H."/>
            <person name="Haas B."/>
            <person name="Maiti R."/>
            <person name="Wu D."/>
            <person name="Peterson J."/>
            <person name="Van Aken S."/>
            <person name="Pai G."/>
            <person name="Militscher J."/>
            <person name="Sellers P."/>
            <person name="Gill J.E."/>
            <person name="Feldblyum T.V."/>
            <person name="Preuss D."/>
            <person name="Lin X."/>
            <person name="Nierman W.C."/>
            <person name="Salzberg S.L."/>
            <person name="White O."/>
            <person name="Venter J.C."/>
            <person name="Fraser C.M."/>
            <person name="Kaneko T."/>
            <person name="Nakamura Y."/>
            <person name="Sato S."/>
            <person name="Kato T."/>
            <person name="Asamizu E."/>
            <person name="Sasamoto S."/>
            <person name="Kimura T."/>
            <person name="Idesawa K."/>
            <person name="Kawashima K."/>
            <person name="Kishida Y."/>
            <person name="Kiyokawa C."/>
            <person name="Kohara M."/>
            <person name="Matsumoto M."/>
            <person name="Matsuno A."/>
            <person name="Muraki A."/>
            <person name="Nakayama S."/>
            <person name="Nakazaki N."/>
            <person name="Shinpo S."/>
            <person name="Takeuchi C."/>
            <person name="Wada T."/>
            <person name="Watanabe A."/>
            <person name="Yamada M."/>
            <person name="Yasuda M."/>
            <person name="Tabata S."/>
        </authorList>
    </citation>
    <scope>NUCLEOTIDE SEQUENCE [LARGE SCALE GENOMIC DNA]</scope>
    <source>
        <strain>cv. Columbia</strain>
    </source>
</reference>
<reference key="2">
    <citation type="journal article" date="2017" name="Plant J.">
        <title>Araport11: a complete reannotation of the Arabidopsis thaliana reference genome.</title>
        <authorList>
            <person name="Cheng C.Y."/>
            <person name="Krishnakumar V."/>
            <person name="Chan A.P."/>
            <person name="Thibaud-Nissen F."/>
            <person name="Schobel S."/>
            <person name="Town C.D."/>
        </authorList>
    </citation>
    <scope>GENOME REANNOTATION</scope>
    <source>
        <strain>cv. Columbia</strain>
    </source>
</reference>
<reference key="3">
    <citation type="submission" date="2002-03" db="EMBL/GenBank/DDBJ databases">
        <title>Full-length cDNA from Arabidopsis thaliana.</title>
        <authorList>
            <person name="Brover V.V."/>
            <person name="Troukhan M.E."/>
            <person name="Alexandrov N.A."/>
            <person name="Lu Y.-P."/>
            <person name="Flavell R.B."/>
            <person name="Feldmann K.A."/>
        </authorList>
    </citation>
    <scope>NUCLEOTIDE SEQUENCE [LARGE SCALE MRNA] OF 1532-1890</scope>
</reference>
<reference key="4">
    <citation type="journal article" date="2001" name="Plant Cell">
        <title>A cell plate-specific callose synthase and its interaction with phragmoplastin.</title>
        <authorList>
            <person name="Hong Z."/>
            <person name="Delauney A.J."/>
            <person name="Verma D.P.S."/>
        </authorList>
    </citation>
    <scope>GENE FAMILY</scope>
    <scope>NOMENCLATURE</scope>
</reference>
<reference key="5">
    <citation type="journal article" date="2005" name="Plant Mol. Biol.">
        <title>Two callose synthases, GSL1 and GSL5, play an essential and redundant role in plant and pollen development and in fertility.</title>
        <authorList>
            <person name="Enns L.C."/>
            <person name="Kanaoka M.M."/>
            <person name="Torii K.U."/>
            <person name="Comai L."/>
            <person name="Okada K."/>
            <person name="Cleland R.E."/>
        </authorList>
    </citation>
    <scope>NOMENCLATURE</scope>
</reference>
<reference key="6">
    <citation type="journal article" date="2008" name="Plant J.">
        <title>Dual function of Arabidopsis glucan synthase-like genes GSL8 and GSL10 in male gametophyte development and plant growth.</title>
        <authorList>
            <person name="Toeller A."/>
            <person name="Brownfield L."/>
            <person name="Neu C."/>
            <person name="Twell D."/>
            <person name="Schulze-Lefert P."/>
        </authorList>
    </citation>
    <scope>FUNCTION</scope>
    <scope>DEVELOPMENTAL STAGE</scope>
    <scope>DISRUPTION PHENOTYPE</scope>
</reference>
<dbReference type="EC" id="2.4.1.34"/>
<dbReference type="EMBL" id="AC012395">
    <property type="protein sequence ID" value="AAF20230.1"/>
    <property type="status" value="ALT_SEQ"/>
    <property type="molecule type" value="Genomic_DNA"/>
</dbReference>
<dbReference type="EMBL" id="CP002686">
    <property type="protein sequence ID" value="AEE74506.1"/>
    <property type="molecule type" value="Genomic_DNA"/>
</dbReference>
<dbReference type="EMBL" id="AY085106">
    <property type="protein sequence ID" value="AAM61660.1"/>
    <property type="status" value="ALT_INIT"/>
    <property type="molecule type" value="mRNA"/>
</dbReference>
<dbReference type="RefSeq" id="NP_187372.5">
    <property type="nucleotide sequence ID" value="NM_111596.6"/>
</dbReference>
<dbReference type="BioGRID" id="5238">
    <property type="interactions" value="4"/>
</dbReference>
<dbReference type="FunCoup" id="Q9SFU6">
    <property type="interactions" value="1541"/>
</dbReference>
<dbReference type="STRING" id="3702.Q9SFU6"/>
<dbReference type="CAZy" id="GT48">
    <property type="family name" value="Glycosyltransferase Family 48"/>
</dbReference>
<dbReference type="iPTMnet" id="Q9SFU6"/>
<dbReference type="SwissPalm" id="Q9SFU6"/>
<dbReference type="PaxDb" id="3702-AT3G07160.1"/>
<dbReference type="EnsemblPlants" id="AT3G07160.1">
    <property type="protein sequence ID" value="AT3G07160.1"/>
    <property type="gene ID" value="AT3G07160"/>
</dbReference>
<dbReference type="GeneID" id="819903"/>
<dbReference type="Gramene" id="AT3G07160.1">
    <property type="protein sequence ID" value="AT3G07160.1"/>
    <property type="gene ID" value="AT3G07160"/>
</dbReference>
<dbReference type="KEGG" id="ath:AT3G07160"/>
<dbReference type="Araport" id="AT3G07160"/>
<dbReference type="TAIR" id="AT3G07160">
    <property type="gene designation" value="GSL10"/>
</dbReference>
<dbReference type="eggNOG" id="KOG0916">
    <property type="taxonomic scope" value="Eukaryota"/>
</dbReference>
<dbReference type="HOGENOM" id="CLU_000742_1_1_1"/>
<dbReference type="InParanoid" id="Q9SFU6"/>
<dbReference type="OMA" id="LAKFKTW"/>
<dbReference type="OrthoDB" id="1880850at2759"/>
<dbReference type="CD-CODE" id="4299E36E">
    <property type="entry name" value="Nucleolus"/>
</dbReference>
<dbReference type="PRO" id="PR:Q9SFU6"/>
<dbReference type="Proteomes" id="UP000006548">
    <property type="component" value="Chromosome 3"/>
</dbReference>
<dbReference type="ExpressionAtlas" id="Q9SFU6">
    <property type="expression patterns" value="baseline and differential"/>
</dbReference>
<dbReference type="GO" id="GO:0000148">
    <property type="term" value="C:1,3-beta-D-glucan synthase complex"/>
    <property type="evidence" value="ECO:0007669"/>
    <property type="project" value="InterPro"/>
</dbReference>
<dbReference type="GO" id="GO:0005829">
    <property type="term" value="C:cytosol"/>
    <property type="evidence" value="ECO:0007005"/>
    <property type="project" value="TAIR"/>
</dbReference>
<dbReference type="GO" id="GO:0005794">
    <property type="term" value="C:Golgi apparatus"/>
    <property type="evidence" value="ECO:0007005"/>
    <property type="project" value="TAIR"/>
</dbReference>
<dbReference type="GO" id="GO:0005886">
    <property type="term" value="C:plasma membrane"/>
    <property type="evidence" value="ECO:0007005"/>
    <property type="project" value="TAIR"/>
</dbReference>
<dbReference type="GO" id="GO:0003843">
    <property type="term" value="F:1,3-beta-D-glucan synthase activity"/>
    <property type="evidence" value="ECO:0007669"/>
    <property type="project" value="UniProtKB-EC"/>
</dbReference>
<dbReference type="GO" id="GO:0006075">
    <property type="term" value="P:(1-&gt;3)-beta-D-glucan biosynthetic process"/>
    <property type="evidence" value="ECO:0007669"/>
    <property type="project" value="InterPro"/>
</dbReference>
<dbReference type="GO" id="GO:0052543">
    <property type="term" value="P:callose deposition in cell wall"/>
    <property type="evidence" value="ECO:0000315"/>
    <property type="project" value="TAIR"/>
</dbReference>
<dbReference type="GO" id="GO:0048589">
    <property type="term" value="P:developmental growth"/>
    <property type="evidence" value="ECO:0000315"/>
    <property type="project" value="TAIR"/>
</dbReference>
<dbReference type="GO" id="GO:0055047">
    <property type="term" value="P:generative cell mitosis"/>
    <property type="evidence" value="ECO:0000315"/>
    <property type="project" value="TAIR"/>
</dbReference>
<dbReference type="GO" id="GO:0009556">
    <property type="term" value="P:microsporogenesis"/>
    <property type="evidence" value="ECO:0000315"/>
    <property type="project" value="TAIR"/>
</dbReference>
<dbReference type="GO" id="GO:0009555">
    <property type="term" value="P:pollen development"/>
    <property type="evidence" value="ECO:0000315"/>
    <property type="project" value="TAIR"/>
</dbReference>
<dbReference type="GO" id="GO:0009846">
    <property type="term" value="P:pollen germination"/>
    <property type="evidence" value="ECO:0000315"/>
    <property type="project" value="TAIR"/>
</dbReference>
<dbReference type="GO" id="GO:0008360">
    <property type="term" value="P:regulation of cell shape"/>
    <property type="evidence" value="ECO:0007669"/>
    <property type="project" value="UniProtKB-KW"/>
</dbReference>
<dbReference type="GO" id="GO:0080092">
    <property type="term" value="P:regulation of pollen tube growth"/>
    <property type="evidence" value="ECO:0000315"/>
    <property type="project" value="TAIR"/>
</dbReference>
<dbReference type="FunFam" id="1.25.40.270:FF:000006">
    <property type="entry name" value="Glucan synthase-like 10"/>
    <property type="match status" value="1"/>
</dbReference>
<dbReference type="Gene3D" id="1.25.40.270">
    <property type="entry name" value="Vacuolar protein sorting-associated protein vta1"/>
    <property type="match status" value="1"/>
</dbReference>
<dbReference type="InterPro" id="IPR026899">
    <property type="entry name" value="FKS1-like_dom1"/>
</dbReference>
<dbReference type="InterPro" id="IPR003440">
    <property type="entry name" value="Glyco_trans_48_dom"/>
</dbReference>
<dbReference type="InterPro" id="IPR023175">
    <property type="entry name" value="Vta1/CALS_N_sf"/>
</dbReference>
<dbReference type="PANTHER" id="PTHR12741:SF47">
    <property type="entry name" value="CALLOSE SYNTHASE 9"/>
    <property type="match status" value="1"/>
</dbReference>
<dbReference type="PANTHER" id="PTHR12741">
    <property type="entry name" value="LYST-INTERACTING PROTEIN LIP5 DOPAMINE RESPONSIVE PROTEIN DRG-1"/>
    <property type="match status" value="1"/>
</dbReference>
<dbReference type="Pfam" id="PF14288">
    <property type="entry name" value="FKS1_dom1"/>
    <property type="match status" value="1"/>
</dbReference>
<dbReference type="Pfam" id="PF02364">
    <property type="entry name" value="Glucan_synthase"/>
    <property type="match status" value="1"/>
</dbReference>
<dbReference type="SMART" id="SM01205">
    <property type="entry name" value="FKS1_dom1"/>
    <property type="match status" value="1"/>
</dbReference>
<sequence length="1890" mass="217087">MSRAESSWERLVNAALRRDRTGGVAGGNQSSIVGYVPSSLSNNRDIDAILRAADEIQDEDPNIARILCEHGYSLAQNLDPNSEGRGVLQFKTGLMSVIKQKLAKREVGTIDRSQDILRLQEFYRLYREKNNVDTLKEEEKQLRESGAFTDELERKTVKRKRVFATLKVLGSVLEQLAKEIPEELKHVIDSDAAMSEDTIAYNIIPLDAPVTTNATTTFPEVQAAVAALKYFPGLPKLPPDFPIPATRTADMLDFLHYIFGFQKDSVSNQREHIVLLLANEQSRLNIPEETEPKLDDAAVRKVFLKSLENYIKWCDYLCIQPAWSNLEAINGDKKLLFLSLYFLIWGEAANIRFLPECLCYIFHHMVREMDEILRQQVARPAESCMPVDSRGSDDGVSFLDHVIAPLYGVVSAEAFNNDNGRAPHSAWRNYDDFNEYFWSLHSFELGWPWRTSSSFFQKPIPRKKLKTGRAKHRGKTSFVEHRTFLHLYHSFHRLWIFLAMMFQALAIIAFNKDDLTSRKTLLQILSLGPTFVVMKFSESVLEVIMMYGAYSTTRRLAVSRIFLRFIWFGLASVFISFLYVKSLKAPNSDSPIVQLYLIVIAIYGGVQFFFSILMRIPTCHNIANKCDRWPVIRFFKWMRQERHYVGRGMYERTSDFIKYLLFWLVVLSAKFSFAYFLQIKPLVGPTRMIVKQNNIPYSWHDFVSRKNYNALTVASLWAPVVAIYLLDIHIFYTIFSAFLGFLLGARDRLGEIRSLEAIHKLFEEFPGAFMRALHVPLTNRTSDTSHQTVDKKNKVDAAHFAPFWNQIIKSLREEDYITDFEMELLLMPKNSGRLELVQWPLFLLSSKILLAKEIAAESNSQEEILERIERDDYMKYAVEEVYHTLKLVLTETLEAEGRLWVERIYEDIQTSLKERNIHHDFQLNKLSLVITRVTALLGILKENETPEHAKGAIKALQDLYDVMRLDILTFNMRGHYETWNLLTQAWNEGRLFTKLKWPKDPELKALVKRLYSLFTIKDSAAHVPRNLEARRRLQFFTNSLFMDVPPPKSVRKMLSFSVFTPYYSEVVLYSMAELTKRNEDGISILFYLQKIYPDEWKNFLARIGRDENALEGDLDNERDILELRFWASYRGQTLARTVRGMMYYRKALMLQSYLERKAGNDATDAEGFELSPEARAQADLKFTYVVTCQIYGRQKEDQKPEAVDIALLMQRNEALRIAYIDVVDSPKEGKSHTEYYSKLVKADISGKDKEIYSIKLPGDPKLGEGKPENQNHAIVFTRGNAIQTIDMNQDNYFEEALKMRNLLEEFDRDHGIRPPTILGVREHVFTGSVSSLASFMSNQETSFVTLGQRVLAKPLKIRMHYGHPDVFDRVFHITRGGISKASRVINISEDIFAGFNTTLRQGNVTHHEYIQVGKGRDVGLNQIALFEGKVAGGNGEQVLSRDVYRLGQLLDFFRMMSFFFTTVGFYLCTMLTVLTVYIFLYGRAYLALSGVGATIRERAILLDDTALSAALNAQFLFQIGVFTAVPMVLGFILEQGFLQAIVSFITMQFQLCTVFFTFSLGTRTHYFGRTILHGGARYQATGRGFVVKHIKFSENYRLYSRSHFVKAMEVILLLVVYLAYGNDEAGAVSYILLTVSSWFLAVSWLFAPYLFNPAGFEWQKVVEDFKEWTNWLFYRGGIGVKGAESWEAWWEEELSHIRTLSGRIMETILSLRFFIFQYGIVYKLKLQGSDTSFAVYGWSWVAFAMIIVLFKVFTFSQKISVNFQLLLRFIQGLSLLMALAGIIVAVVLTPLSVTDIFACVLAFIPTGWGILSIACAWKPVLKRMGMWKSIRSLARLYDALMGMLIFLPVALCSWFPFVSTFQTRMMFNQAFSRGLEISLILAGDNPNSGL</sequence>
<proteinExistence type="evidence at transcript level"/>
<gene>
    <name type="primary">CALS9</name>
    <name type="synonym">GSL10</name>
    <name type="ordered locus">At3g07160</name>
    <name type="ORF">T1B9.18</name>
</gene>
<comment type="function">
    <text evidence="2">Involved in sporophytic and gametophytic development. Required for normal plant development. During pollen formation, required for the entry of microspores into mitosis and microspore symmetric division. May be required for correct temporal and spatial control of callose deposition during pollen mitosis. During plant growth and development, callose is found as a transitory component of the cell plate in dividing cells, is a major component of pollen mother cell walls and pollen tubes, and is found as a structural component of plasmodesmatal canals.</text>
</comment>
<comment type="catalytic activity">
    <reaction>
        <text>[(1-&gt;3)-beta-D-glucosyl](n) + UDP-alpha-D-glucose = [(1-&gt;3)-beta-D-glucosyl](n+1) + UDP + H(+)</text>
        <dbReference type="Rhea" id="RHEA:21476"/>
        <dbReference type="Rhea" id="RHEA-COMP:11146"/>
        <dbReference type="Rhea" id="RHEA-COMP:14303"/>
        <dbReference type="ChEBI" id="CHEBI:15378"/>
        <dbReference type="ChEBI" id="CHEBI:37671"/>
        <dbReference type="ChEBI" id="CHEBI:58223"/>
        <dbReference type="ChEBI" id="CHEBI:58885"/>
        <dbReference type="EC" id="2.4.1.34"/>
    </reaction>
</comment>
<comment type="subcellular location">
    <subcellularLocation>
        <location evidence="3">Cell membrane</location>
        <topology evidence="3">Multi-pass membrane protein</topology>
    </subcellularLocation>
</comment>
<comment type="developmental stage">
    <text evidence="2">Expressed throughout pollen development with a peak at bicellular pollen stage.</text>
</comment>
<comment type="disruption phenotype">
    <text evidence="2">Plants develop deformed or collapsed and inviable pollen grains.</text>
</comment>
<comment type="similarity">
    <text evidence="3">Belongs to the glycosyltransferase 48 family.</text>
</comment>
<comment type="sequence caution" evidence="3">
    <conflict type="erroneous gene model prediction">
        <sequence resource="EMBL-CDS" id="AAF20230"/>
    </conflict>
</comment>
<comment type="sequence caution" evidence="3">
    <conflict type="erroneous initiation">
        <sequence resource="EMBL-CDS" id="AAM61660"/>
    </conflict>
    <text>Truncated N-terminus.</text>
</comment>
<evidence type="ECO:0000255" key="1"/>
<evidence type="ECO:0000269" key="2">
    <source>
    </source>
</evidence>
<evidence type="ECO:0000305" key="3"/>
<feature type="chain" id="PRO_0000334581" description="Callose synthase 9">
    <location>
        <begin position="1"/>
        <end position="1890"/>
    </location>
</feature>
<feature type="topological domain" description="Cytoplasmic" evidence="1">
    <location>
        <begin position="1"/>
        <end position="489"/>
    </location>
</feature>
<feature type="transmembrane region" description="Helical" evidence="1">
    <location>
        <begin position="490"/>
        <end position="510"/>
    </location>
</feature>
<feature type="topological domain" description="Extracellular" evidence="1">
    <location>
        <begin position="511"/>
        <end position="523"/>
    </location>
</feature>
<feature type="transmembrane region" description="Helical" evidence="1">
    <location>
        <begin position="524"/>
        <end position="544"/>
    </location>
</feature>
<feature type="topological domain" description="Cytoplasmic" evidence="1">
    <location>
        <begin position="545"/>
        <end position="560"/>
    </location>
</feature>
<feature type="transmembrane region" description="Helical" evidence="1">
    <location>
        <begin position="561"/>
        <end position="581"/>
    </location>
</feature>
<feature type="topological domain" description="Extracellular" evidence="1">
    <location>
        <begin position="582"/>
        <end position="591"/>
    </location>
</feature>
<feature type="transmembrane region" description="Helical" evidence="1">
    <location>
        <begin position="592"/>
        <end position="612"/>
    </location>
</feature>
<feature type="topological domain" description="Cytoplasmic" evidence="1">
    <location>
        <begin position="613"/>
        <end position="658"/>
    </location>
</feature>
<feature type="transmembrane region" description="Helical" evidence="1">
    <location>
        <begin position="659"/>
        <end position="679"/>
    </location>
</feature>
<feature type="topological domain" description="Extracellular" evidence="1">
    <location>
        <begin position="680"/>
        <end position="722"/>
    </location>
</feature>
<feature type="transmembrane region" description="Helical" evidence="1">
    <location>
        <begin position="723"/>
        <end position="743"/>
    </location>
</feature>
<feature type="topological domain" description="Cytoplasmic" evidence="1">
    <location>
        <begin position="744"/>
        <end position="1457"/>
    </location>
</feature>
<feature type="transmembrane region" description="Helical" evidence="1">
    <location>
        <begin position="1458"/>
        <end position="1478"/>
    </location>
</feature>
<feature type="topological domain" description="Extracellular" evidence="1">
    <location>
        <begin position="1479"/>
        <end position="1512"/>
    </location>
</feature>
<feature type="transmembrane region" description="Helical" evidence="1">
    <location>
        <begin position="1513"/>
        <end position="1533"/>
    </location>
</feature>
<feature type="topological domain" description="Cytoplasmic" evidence="1">
    <location>
        <begin position="1534"/>
        <end position="1539"/>
    </location>
</feature>
<feature type="transmembrane region" description="Helical" evidence="1">
    <location>
        <begin position="1540"/>
        <end position="1560"/>
    </location>
</feature>
<feature type="topological domain" description="Extracellular" evidence="1">
    <location>
        <begin position="1561"/>
        <end position="1609"/>
    </location>
</feature>
<feature type="transmembrane region" description="Helical" evidence="1">
    <location>
        <begin position="1610"/>
        <end position="1630"/>
    </location>
</feature>
<feature type="transmembrane region" description="Helical" evidence="1">
    <location>
        <begin position="1631"/>
        <end position="1651"/>
    </location>
</feature>
<feature type="topological domain" description="Extracellular" evidence="1">
    <location>
        <begin position="1652"/>
        <end position="1703"/>
    </location>
</feature>
<feature type="transmembrane region" description="Helical" evidence="1">
    <location>
        <begin position="1704"/>
        <end position="1724"/>
    </location>
</feature>
<feature type="topological domain" description="Cytoplasmic" evidence="1">
    <location>
        <begin position="1725"/>
        <end position="1732"/>
    </location>
</feature>
<feature type="transmembrane region" description="Helical" evidence="1">
    <location>
        <begin position="1733"/>
        <end position="1753"/>
    </location>
</feature>
<feature type="topological domain" description="Extracellular" evidence="1">
    <location>
        <begin position="1754"/>
        <end position="1768"/>
    </location>
</feature>
<feature type="transmembrane region" description="Helical" evidence="1">
    <location>
        <begin position="1769"/>
        <end position="1789"/>
    </location>
</feature>
<feature type="topological domain" description="Cytoplasmic" evidence="1">
    <location>
        <begin position="1790"/>
        <end position="1795"/>
    </location>
</feature>
<feature type="transmembrane region" description="Helical" evidence="1">
    <location>
        <begin position="1796"/>
        <end position="1816"/>
    </location>
</feature>
<feature type="topological domain" description="Extracellular" evidence="1">
    <location>
        <begin position="1817"/>
        <end position="1838"/>
    </location>
</feature>
<feature type="transmembrane region" description="Helical" evidence="1">
    <location>
        <begin position="1839"/>
        <end position="1859"/>
    </location>
</feature>
<feature type="topological domain" description="Cytoplasmic" evidence="1">
    <location>
        <begin position="1860"/>
        <end position="1890"/>
    </location>
</feature>
<feature type="sequence conflict" description="In Ref. 3; AAM61660." evidence="3" ref="3">
    <original>R</original>
    <variation>M</variation>
    <location>
        <position position="1577"/>
    </location>
</feature>
<keyword id="KW-1003">Cell membrane</keyword>
<keyword id="KW-0133">Cell shape</keyword>
<keyword id="KW-0961">Cell wall biogenesis/degradation</keyword>
<keyword id="KW-0328">Glycosyltransferase</keyword>
<keyword id="KW-0472">Membrane</keyword>
<keyword id="KW-1185">Reference proteome</keyword>
<keyword id="KW-0808">Transferase</keyword>
<keyword id="KW-0812">Transmembrane</keyword>
<keyword id="KW-1133">Transmembrane helix</keyword>
<organism>
    <name type="scientific">Arabidopsis thaliana</name>
    <name type="common">Mouse-ear cress</name>
    <dbReference type="NCBI Taxonomy" id="3702"/>
    <lineage>
        <taxon>Eukaryota</taxon>
        <taxon>Viridiplantae</taxon>
        <taxon>Streptophyta</taxon>
        <taxon>Embryophyta</taxon>
        <taxon>Tracheophyta</taxon>
        <taxon>Spermatophyta</taxon>
        <taxon>Magnoliopsida</taxon>
        <taxon>eudicotyledons</taxon>
        <taxon>Gunneridae</taxon>
        <taxon>Pentapetalae</taxon>
        <taxon>rosids</taxon>
        <taxon>malvids</taxon>
        <taxon>Brassicales</taxon>
        <taxon>Brassicaceae</taxon>
        <taxon>Camelineae</taxon>
        <taxon>Arabidopsis</taxon>
    </lineage>
</organism>
<protein>
    <recommendedName>
        <fullName>Callose synthase 9</fullName>
        <ecNumber>2.4.1.34</ecNumber>
    </recommendedName>
    <alternativeName>
        <fullName>1,3-beta-glucan synthase</fullName>
    </alternativeName>
    <alternativeName>
        <fullName>Protein GLUCAN SYNTHASE-LIKE 10</fullName>
    </alternativeName>
</protein>
<name>CALS9_ARATH</name>